<feature type="signal peptide" evidence="2">
    <location>
        <begin position="1"/>
        <end position="18"/>
    </location>
</feature>
<feature type="chain" id="PRO_0000429751" description="Endo-1,4-beta-xylanase 2">
    <location>
        <begin position="19"/>
        <end position="325"/>
    </location>
</feature>
<feature type="domain" description="GH10" evidence="3">
    <location>
        <begin position="26"/>
        <end position="325"/>
    </location>
</feature>
<feature type="active site" description="Proton donor" evidence="1">
    <location>
        <position position="157"/>
    </location>
</feature>
<feature type="active site" description="Nucleophile" evidence="4">
    <location>
        <position position="262"/>
    </location>
</feature>
<feature type="glycosylation site" description="N-linked (GlcNAc...) asparagine" evidence="2">
    <location>
        <position position="28"/>
    </location>
</feature>
<feature type="disulfide bond" evidence="1">
    <location>
        <begin position="280"/>
        <end position="286"/>
    </location>
</feature>
<name>XYN2_CLAPU</name>
<reference key="1">
    <citation type="journal article" date="1998" name="Phytopathology">
        <title>The xylanolytic system of Claviceps purpurea: cytological evidence for secretion of xylanases in infected rye tissue and molecular characterization of two xylanase genes.</title>
        <authorList>
            <person name="Giesbert S."/>
            <person name="Lepping H.B."/>
            <person name="Tenberge K.B."/>
            <person name="Tudzynski P."/>
        </authorList>
    </citation>
    <scope>NUCLEOTIDE SEQUENCE [GENOMIC DNA]</scope>
    <scope>SUBCELLULAR LOCATION</scope>
    <scope>INDUCTION</scope>
    <source>
        <strain>T5</strain>
    </source>
</reference>
<sequence>MLYTSIFAAAMAASGAMAAPTTSHGASNCTTLDSFFKSHGKLYWGTAADKNTLMKPGVADFIAKEFGQVTPENSMKFDATEPSRGQFHFDAADYLVDYAEKHDLLIRGHTFLWWSQMPAWVKAIKDKDTLIDVIQTHISTVAGRYKGKIYAWDVVNEIFEQDGSFRKTVYYNLLGEDYVRIAFEAAHKADPKAKLYINDFNLDDPNAAKLKAMIKYVTKWRAAGWPVHGIGSQSHLFAGMGEKSAAAIKMLGAAADEVAITELDITGAPQADYEAVTKGCIDVKNCVGITSWGARDTDSWLASKSPLLFDGNFKPKAAVKAIMAI</sequence>
<comment type="function">
    <text evidence="1">Endo-1,4-beta-xylanase involved in the hydrolysis of xylan, a major structural heterogeneous polysaccharide found in plant biomass representing the second most abundant polysaccharide in the biosphere, after cellulose.</text>
</comment>
<comment type="catalytic activity">
    <reaction>
        <text>Endohydrolysis of (1-&gt;4)-beta-D-xylosidic linkages in xylans.</text>
        <dbReference type="EC" id="3.2.1.8"/>
    </reaction>
</comment>
<comment type="pathway">
    <text>Glycan degradation; xylan degradation.</text>
</comment>
<comment type="subcellular location">
    <subcellularLocation>
        <location evidence="5">Secreted</location>
    </subcellularLocation>
</comment>
<comment type="induction">
    <text evidence="5">Expressed throughout the entire infection process during in infection of rye tissue.</text>
</comment>
<comment type="similarity">
    <text evidence="6">Belongs to the glycosyl hydrolase 10 (cellulase F) family.</text>
</comment>
<gene>
    <name type="primary">xyl2</name>
</gene>
<proteinExistence type="evidence at transcript level"/>
<keyword id="KW-0119">Carbohydrate metabolism</keyword>
<keyword id="KW-1015">Disulfide bond</keyword>
<keyword id="KW-0325">Glycoprotein</keyword>
<keyword id="KW-0326">Glycosidase</keyword>
<keyword id="KW-0378">Hydrolase</keyword>
<keyword id="KW-0624">Polysaccharide degradation</keyword>
<keyword id="KW-0964">Secreted</keyword>
<keyword id="KW-0732">Signal</keyword>
<keyword id="KW-0858">Xylan degradation</keyword>
<organism>
    <name type="scientific">Claviceps purpurea</name>
    <name type="common">Ergot fungus</name>
    <name type="synonym">Sphacelia segetum</name>
    <dbReference type="NCBI Taxonomy" id="5111"/>
    <lineage>
        <taxon>Eukaryota</taxon>
        <taxon>Fungi</taxon>
        <taxon>Dikarya</taxon>
        <taxon>Ascomycota</taxon>
        <taxon>Pezizomycotina</taxon>
        <taxon>Sordariomycetes</taxon>
        <taxon>Hypocreomycetidae</taxon>
        <taxon>Hypocreales</taxon>
        <taxon>Clavicipitaceae</taxon>
        <taxon>Claviceps</taxon>
    </lineage>
</organism>
<evidence type="ECO:0000250" key="1"/>
<evidence type="ECO:0000255" key="2"/>
<evidence type="ECO:0000255" key="3">
    <source>
        <dbReference type="PROSITE-ProRule" id="PRU01096"/>
    </source>
</evidence>
<evidence type="ECO:0000255" key="4">
    <source>
        <dbReference type="PROSITE-ProRule" id="PRU10061"/>
    </source>
</evidence>
<evidence type="ECO:0000269" key="5">
    <source>
    </source>
</evidence>
<evidence type="ECO:0000305" key="6"/>
<protein>
    <recommendedName>
        <fullName>Endo-1,4-beta-xylanase 2</fullName>
        <shortName>Xylanase 2</shortName>
        <ecNumber>3.2.1.8</ecNumber>
    </recommendedName>
    <alternativeName>
        <fullName>1,4-beta-D-xylan xylanohydrolase 2</fullName>
    </alternativeName>
</protein>
<accession>O74717</accession>
<dbReference type="EC" id="3.2.1.8"/>
<dbReference type="EMBL" id="Y16970">
    <property type="protein sequence ID" value="CAA76571.1"/>
    <property type="molecule type" value="Genomic_DNA"/>
</dbReference>
<dbReference type="SMR" id="O74717"/>
<dbReference type="CAZy" id="GH10">
    <property type="family name" value="Glycoside Hydrolase Family 10"/>
</dbReference>
<dbReference type="GlyCosmos" id="O74717">
    <property type="glycosylation" value="1 site, No reported glycans"/>
</dbReference>
<dbReference type="VEuPathDB" id="FungiDB:CPUR_08536"/>
<dbReference type="UniPathway" id="UPA00114"/>
<dbReference type="GO" id="GO:0005576">
    <property type="term" value="C:extracellular region"/>
    <property type="evidence" value="ECO:0007669"/>
    <property type="project" value="UniProtKB-SubCell"/>
</dbReference>
<dbReference type="GO" id="GO:0031176">
    <property type="term" value="F:endo-1,4-beta-xylanase activity"/>
    <property type="evidence" value="ECO:0007669"/>
    <property type="project" value="UniProtKB-EC"/>
</dbReference>
<dbReference type="GO" id="GO:0045493">
    <property type="term" value="P:xylan catabolic process"/>
    <property type="evidence" value="ECO:0007669"/>
    <property type="project" value="UniProtKB-UniPathway"/>
</dbReference>
<dbReference type="Gene3D" id="3.20.20.80">
    <property type="entry name" value="Glycosidases"/>
    <property type="match status" value="1"/>
</dbReference>
<dbReference type="InterPro" id="IPR044846">
    <property type="entry name" value="GH10"/>
</dbReference>
<dbReference type="InterPro" id="IPR031158">
    <property type="entry name" value="GH10_AS"/>
</dbReference>
<dbReference type="InterPro" id="IPR001000">
    <property type="entry name" value="GH10_dom"/>
</dbReference>
<dbReference type="InterPro" id="IPR017853">
    <property type="entry name" value="Glycoside_hydrolase_SF"/>
</dbReference>
<dbReference type="PANTHER" id="PTHR31490:SF76">
    <property type="entry name" value="ENDO-1,4-BETA-XYLANASE C"/>
    <property type="match status" value="1"/>
</dbReference>
<dbReference type="PANTHER" id="PTHR31490">
    <property type="entry name" value="GLYCOSYL HYDROLASE"/>
    <property type="match status" value="1"/>
</dbReference>
<dbReference type="Pfam" id="PF00331">
    <property type="entry name" value="Glyco_hydro_10"/>
    <property type="match status" value="1"/>
</dbReference>
<dbReference type="PRINTS" id="PR00134">
    <property type="entry name" value="GLHYDRLASE10"/>
</dbReference>
<dbReference type="SMART" id="SM00633">
    <property type="entry name" value="Glyco_10"/>
    <property type="match status" value="1"/>
</dbReference>
<dbReference type="SUPFAM" id="SSF51445">
    <property type="entry name" value="(Trans)glycosidases"/>
    <property type="match status" value="1"/>
</dbReference>
<dbReference type="PROSITE" id="PS00591">
    <property type="entry name" value="GH10_1"/>
    <property type="match status" value="1"/>
</dbReference>
<dbReference type="PROSITE" id="PS51760">
    <property type="entry name" value="GH10_2"/>
    <property type="match status" value="1"/>
</dbReference>